<dbReference type="EC" id="2.4.1.227" evidence="1"/>
<dbReference type="EMBL" id="CP000744">
    <property type="protein sequence ID" value="ABR82173.1"/>
    <property type="molecule type" value="Genomic_DNA"/>
</dbReference>
<dbReference type="RefSeq" id="WP_012077193.1">
    <property type="nucleotide sequence ID" value="NC_009656.1"/>
</dbReference>
<dbReference type="SMR" id="A6VB85"/>
<dbReference type="CAZy" id="GT28">
    <property type="family name" value="Glycosyltransferase Family 28"/>
</dbReference>
<dbReference type="KEGG" id="pap:PSPA7_4984"/>
<dbReference type="HOGENOM" id="CLU_037404_2_0_6"/>
<dbReference type="UniPathway" id="UPA00219"/>
<dbReference type="Proteomes" id="UP000001582">
    <property type="component" value="Chromosome"/>
</dbReference>
<dbReference type="GO" id="GO:0005886">
    <property type="term" value="C:plasma membrane"/>
    <property type="evidence" value="ECO:0007669"/>
    <property type="project" value="UniProtKB-SubCell"/>
</dbReference>
<dbReference type="GO" id="GO:0051991">
    <property type="term" value="F:UDP-N-acetyl-D-glucosamine:N-acetylmuramoyl-L-alanyl-D-glutamyl-meso-2,6-diaminopimelyl-D-alanyl-D-alanine-diphosphoundecaprenol 4-beta-N-acetylglucosaminlytransferase activity"/>
    <property type="evidence" value="ECO:0007669"/>
    <property type="project" value="RHEA"/>
</dbReference>
<dbReference type="GO" id="GO:0050511">
    <property type="term" value="F:undecaprenyldiphospho-muramoylpentapeptide beta-N-acetylglucosaminyltransferase activity"/>
    <property type="evidence" value="ECO:0007669"/>
    <property type="project" value="UniProtKB-UniRule"/>
</dbReference>
<dbReference type="GO" id="GO:0005975">
    <property type="term" value="P:carbohydrate metabolic process"/>
    <property type="evidence" value="ECO:0007669"/>
    <property type="project" value="InterPro"/>
</dbReference>
<dbReference type="GO" id="GO:0051301">
    <property type="term" value="P:cell division"/>
    <property type="evidence" value="ECO:0007669"/>
    <property type="project" value="UniProtKB-KW"/>
</dbReference>
<dbReference type="GO" id="GO:0071555">
    <property type="term" value="P:cell wall organization"/>
    <property type="evidence" value="ECO:0007669"/>
    <property type="project" value="UniProtKB-KW"/>
</dbReference>
<dbReference type="GO" id="GO:0030259">
    <property type="term" value="P:lipid glycosylation"/>
    <property type="evidence" value="ECO:0007669"/>
    <property type="project" value="UniProtKB-UniRule"/>
</dbReference>
<dbReference type="GO" id="GO:0009252">
    <property type="term" value="P:peptidoglycan biosynthetic process"/>
    <property type="evidence" value="ECO:0007669"/>
    <property type="project" value="UniProtKB-UniRule"/>
</dbReference>
<dbReference type="GO" id="GO:0008360">
    <property type="term" value="P:regulation of cell shape"/>
    <property type="evidence" value="ECO:0007669"/>
    <property type="project" value="UniProtKB-KW"/>
</dbReference>
<dbReference type="CDD" id="cd03785">
    <property type="entry name" value="GT28_MurG"/>
    <property type="match status" value="1"/>
</dbReference>
<dbReference type="Gene3D" id="3.40.50.2000">
    <property type="entry name" value="Glycogen Phosphorylase B"/>
    <property type="match status" value="2"/>
</dbReference>
<dbReference type="HAMAP" id="MF_00033">
    <property type="entry name" value="MurG"/>
    <property type="match status" value="1"/>
</dbReference>
<dbReference type="InterPro" id="IPR006009">
    <property type="entry name" value="GlcNAc_MurG"/>
</dbReference>
<dbReference type="InterPro" id="IPR007235">
    <property type="entry name" value="Glyco_trans_28_C"/>
</dbReference>
<dbReference type="InterPro" id="IPR004276">
    <property type="entry name" value="GlycoTrans_28_N"/>
</dbReference>
<dbReference type="NCBIfam" id="TIGR01133">
    <property type="entry name" value="murG"/>
    <property type="match status" value="1"/>
</dbReference>
<dbReference type="PANTHER" id="PTHR21015:SF22">
    <property type="entry name" value="GLYCOSYLTRANSFERASE"/>
    <property type="match status" value="1"/>
</dbReference>
<dbReference type="PANTHER" id="PTHR21015">
    <property type="entry name" value="UDP-N-ACETYLGLUCOSAMINE--N-ACETYLMURAMYL-(PENTAPEPTIDE) PYROPHOSPHORYL-UNDECAPRENOL N-ACETYLGLUCOSAMINE TRANSFERASE 1"/>
    <property type="match status" value="1"/>
</dbReference>
<dbReference type="Pfam" id="PF04101">
    <property type="entry name" value="Glyco_tran_28_C"/>
    <property type="match status" value="1"/>
</dbReference>
<dbReference type="Pfam" id="PF03033">
    <property type="entry name" value="Glyco_transf_28"/>
    <property type="match status" value="1"/>
</dbReference>
<dbReference type="SUPFAM" id="SSF53756">
    <property type="entry name" value="UDP-Glycosyltransferase/glycogen phosphorylase"/>
    <property type="match status" value="1"/>
</dbReference>
<organism>
    <name type="scientific">Pseudomonas paraeruginosa (strain DSM 24068 / PA7)</name>
    <name type="common">Pseudomonas aeruginosa (strain PA7)</name>
    <dbReference type="NCBI Taxonomy" id="381754"/>
    <lineage>
        <taxon>Bacteria</taxon>
        <taxon>Pseudomonadati</taxon>
        <taxon>Pseudomonadota</taxon>
        <taxon>Gammaproteobacteria</taxon>
        <taxon>Pseudomonadales</taxon>
        <taxon>Pseudomonadaceae</taxon>
        <taxon>Pseudomonas</taxon>
        <taxon>Pseudomonas paraeruginosa</taxon>
    </lineage>
</organism>
<proteinExistence type="inferred from homology"/>
<protein>
    <recommendedName>
        <fullName evidence="1">UDP-N-acetylglucosamine--N-acetylmuramyl-(pentapeptide) pyrophosphoryl-undecaprenol N-acetylglucosamine transferase</fullName>
        <ecNumber evidence="1">2.4.1.227</ecNumber>
    </recommendedName>
    <alternativeName>
        <fullName evidence="1">Undecaprenyl-PP-MurNAc-pentapeptide-UDPGlcNAc GlcNAc transferase</fullName>
    </alternativeName>
</protein>
<reference key="1">
    <citation type="submission" date="2007-06" db="EMBL/GenBank/DDBJ databases">
        <authorList>
            <person name="Dodson R.J."/>
            <person name="Harkins D."/>
            <person name="Paulsen I.T."/>
        </authorList>
    </citation>
    <scope>NUCLEOTIDE SEQUENCE [LARGE SCALE GENOMIC DNA]</scope>
    <source>
        <strain>DSM 24068 / PA7</strain>
    </source>
</reference>
<gene>
    <name evidence="1" type="primary">murG</name>
    <name type="ordered locus">PSPA7_4984</name>
</gene>
<name>MURG_PSEP7</name>
<comment type="function">
    <text evidence="1">Cell wall formation. Catalyzes the transfer of a GlcNAc subunit on undecaprenyl-pyrophosphoryl-MurNAc-pentapeptide (lipid intermediate I) to form undecaprenyl-pyrophosphoryl-MurNAc-(pentapeptide)GlcNAc (lipid intermediate II).</text>
</comment>
<comment type="catalytic activity">
    <reaction evidence="1">
        <text>di-trans,octa-cis-undecaprenyl diphospho-N-acetyl-alpha-D-muramoyl-L-alanyl-D-glutamyl-meso-2,6-diaminopimeloyl-D-alanyl-D-alanine + UDP-N-acetyl-alpha-D-glucosamine = di-trans,octa-cis-undecaprenyl diphospho-[N-acetyl-alpha-D-glucosaminyl-(1-&gt;4)]-N-acetyl-alpha-D-muramoyl-L-alanyl-D-glutamyl-meso-2,6-diaminopimeloyl-D-alanyl-D-alanine + UDP + H(+)</text>
        <dbReference type="Rhea" id="RHEA:31227"/>
        <dbReference type="ChEBI" id="CHEBI:15378"/>
        <dbReference type="ChEBI" id="CHEBI:57705"/>
        <dbReference type="ChEBI" id="CHEBI:58223"/>
        <dbReference type="ChEBI" id="CHEBI:61387"/>
        <dbReference type="ChEBI" id="CHEBI:61388"/>
        <dbReference type="EC" id="2.4.1.227"/>
    </reaction>
</comment>
<comment type="pathway">
    <text evidence="1">Cell wall biogenesis; peptidoglycan biosynthesis.</text>
</comment>
<comment type="subcellular location">
    <subcellularLocation>
        <location evidence="1">Cell inner membrane</location>
        <topology evidence="1">Peripheral membrane protein</topology>
        <orientation evidence="1">Cytoplasmic side</orientation>
    </subcellularLocation>
</comment>
<comment type="similarity">
    <text evidence="1">Belongs to the glycosyltransferase 28 family. MurG subfamily.</text>
</comment>
<evidence type="ECO:0000255" key="1">
    <source>
        <dbReference type="HAMAP-Rule" id="MF_00033"/>
    </source>
</evidence>
<feature type="chain" id="PRO_1000057251" description="UDP-N-acetylglucosamine--N-acetylmuramyl-(pentapeptide) pyrophosphoryl-undecaprenol N-acetylglucosamine transferase">
    <location>
        <begin position="1"/>
        <end position="357"/>
    </location>
</feature>
<feature type="binding site" evidence="1">
    <location>
        <begin position="12"/>
        <end position="14"/>
    </location>
    <ligand>
        <name>UDP-N-acetyl-alpha-D-glucosamine</name>
        <dbReference type="ChEBI" id="CHEBI:57705"/>
    </ligand>
</feature>
<feature type="binding site" evidence="1">
    <location>
        <position position="124"/>
    </location>
    <ligand>
        <name>UDP-N-acetyl-alpha-D-glucosamine</name>
        <dbReference type="ChEBI" id="CHEBI:57705"/>
    </ligand>
</feature>
<feature type="binding site" evidence="1">
    <location>
        <position position="163"/>
    </location>
    <ligand>
        <name>UDP-N-acetyl-alpha-D-glucosamine</name>
        <dbReference type="ChEBI" id="CHEBI:57705"/>
    </ligand>
</feature>
<feature type="binding site" evidence="1">
    <location>
        <position position="189"/>
    </location>
    <ligand>
        <name>UDP-N-acetyl-alpha-D-glucosamine</name>
        <dbReference type="ChEBI" id="CHEBI:57705"/>
    </ligand>
</feature>
<feature type="binding site" evidence="1">
    <location>
        <position position="243"/>
    </location>
    <ligand>
        <name>UDP-N-acetyl-alpha-D-glucosamine</name>
        <dbReference type="ChEBI" id="CHEBI:57705"/>
    </ligand>
</feature>
<feature type="binding site" evidence="1">
    <location>
        <begin position="262"/>
        <end position="267"/>
    </location>
    <ligand>
        <name>UDP-N-acetyl-alpha-D-glucosamine</name>
        <dbReference type="ChEBI" id="CHEBI:57705"/>
    </ligand>
</feature>
<feature type="binding site" evidence="1">
    <location>
        <position position="288"/>
    </location>
    <ligand>
        <name>UDP-N-acetyl-alpha-D-glucosamine</name>
        <dbReference type="ChEBI" id="CHEBI:57705"/>
    </ligand>
</feature>
<sequence length="357" mass="37769">MKGNVLIMAGGTGGHVFPALACAREFQARGYAVHWLGTPRGIENDLVPKAGLPLHLIQVSGLRGKGLKSLVKAPLELLKSLFQALRVIRQLRPVCVLGLGGYVTGPGGLAARLNGVPLVIHEQNAVAGTANRSLAPIARRVCEAFPDTFPASDKRLTTGNPVRGELFLDAHARAPLTGRRVNLLVLGGSLGAEPLNKLLPEALAQVPLEIRPAIRHQAGRQHAEITAERYRTVAVEADVAPFISDMAAAYAWADLVICRAGALTVSELAAAGLPAFLVPLPHAIDDHQTRNAEFLVRSGAGRLLPQKSTGAAELAAQLSEVLMHPETLRSMADQARSLAKPEATRTVVDACLEVARG</sequence>
<keyword id="KW-0131">Cell cycle</keyword>
<keyword id="KW-0132">Cell division</keyword>
<keyword id="KW-0997">Cell inner membrane</keyword>
<keyword id="KW-1003">Cell membrane</keyword>
<keyword id="KW-0133">Cell shape</keyword>
<keyword id="KW-0961">Cell wall biogenesis/degradation</keyword>
<keyword id="KW-0328">Glycosyltransferase</keyword>
<keyword id="KW-0472">Membrane</keyword>
<keyword id="KW-0573">Peptidoglycan synthesis</keyword>
<keyword id="KW-0808">Transferase</keyword>
<accession>A6VB85</accession>